<feature type="chain" id="PRO_0000142355" description="Metalloprotease TldD homolog">
    <location>
        <begin position="1"/>
        <end position="483"/>
    </location>
</feature>
<dbReference type="EC" id="3.4.-.-"/>
<dbReference type="EMBL" id="AE013218">
    <property type="protein sequence ID" value="AAM67937.1"/>
    <property type="molecule type" value="Genomic_DNA"/>
</dbReference>
<dbReference type="RefSeq" id="WP_011053904.1">
    <property type="nucleotide sequence ID" value="NC_004061.1"/>
</dbReference>
<dbReference type="SMR" id="Q8K9F2"/>
<dbReference type="STRING" id="198804.BUsg_385"/>
<dbReference type="GeneID" id="93003854"/>
<dbReference type="KEGG" id="bas:BUsg_385"/>
<dbReference type="eggNOG" id="COG0312">
    <property type="taxonomic scope" value="Bacteria"/>
</dbReference>
<dbReference type="HOGENOM" id="CLU_026425_1_0_6"/>
<dbReference type="Proteomes" id="UP000000416">
    <property type="component" value="Chromosome"/>
</dbReference>
<dbReference type="GO" id="GO:0005829">
    <property type="term" value="C:cytosol"/>
    <property type="evidence" value="ECO:0007669"/>
    <property type="project" value="TreeGrafter"/>
</dbReference>
<dbReference type="GO" id="GO:0008237">
    <property type="term" value="F:metallopeptidase activity"/>
    <property type="evidence" value="ECO:0007669"/>
    <property type="project" value="UniProtKB-KW"/>
</dbReference>
<dbReference type="GO" id="GO:0006508">
    <property type="term" value="P:proteolysis"/>
    <property type="evidence" value="ECO:0007669"/>
    <property type="project" value="UniProtKB-KW"/>
</dbReference>
<dbReference type="Gene3D" id="3.30.2290.10">
    <property type="entry name" value="PmbA/TldD superfamily"/>
    <property type="match status" value="1"/>
</dbReference>
<dbReference type="InterPro" id="IPR045569">
    <property type="entry name" value="Metalloprtase-TldD/E_C"/>
</dbReference>
<dbReference type="InterPro" id="IPR045570">
    <property type="entry name" value="Metalloprtase-TldD/E_cen_dom"/>
</dbReference>
<dbReference type="InterPro" id="IPR002510">
    <property type="entry name" value="Metalloprtase-TldD/E_N"/>
</dbReference>
<dbReference type="InterPro" id="IPR051463">
    <property type="entry name" value="Peptidase_U62_metallo"/>
</dbReference>
<dbReference type="InterPro" id="IPR025502">
    <property type="entry name" value="TldD"/>
</dbReference>
<dbReference type="InterPro" id="IPR035068">
    <property type="entry name" value="TldD/PmbA_N"/>
</dbReference>
<dbReference type="InterPro" id="IPR036059">
    <property type="entry name" value="TldD/PmbA_sf"/>
</dbReference>
<dbReference type="NCBIfam" id="NF008006">
    <property type="entry name" value="PRK10735.1"/>
    <property type="match status" value="1"/>
</dbReference>
<dbReference type="PANTHER" id="PTHR30624:SF4">
    <property type="entry name" value="METALLOPROTEASE TLDD"/>
    <property type="match status" value="1"/>
</dbReference>
<dbReference type="PANTHER" id="PTHR30624">
    <property type="entry name" value="UNCHARACTERIZED PROTEIN TLDD AND PMBA"/>
    <property type="match status" value="1"/>
</dbReference>
<dbReference type="Pfam" id="PF01523">
    <property type="entry name" value="PmbA_TldD_1st"/>
    <property type="match status" value="1"/>
</dbReference>
<dbReference type="Pfam" id="PF19290">
    <property type="entry name" value="PmbA_TldD_2nd"/>
    <property type="match status" value="1"/>
</dbReference>
<dbReference type="Pfam" id="PF19289">
    <property type="entry name" value="PmbA_TldD_3rd"/>
    <property type="match status" value="1"/>
</dbReference>
<dbReference type="PIRSF" id="PIRSF004919">
    <property type="entry name" value="TldD"/>
    <property type="match status" value="1"/>
</dbReference>
<dbReference type="SUPFAM" id="SSF111283">
    <property type="entry name" value="Putative modulator of DNA gyrase, PmbA/TldD"/>
    <property type="match status" value="1"/>
</dbReference>
<reference key="1">
    <citation type="journal article" date="2002" name="Science">
        <title>50 million years of genomic stasis in endosymbiotic bacteria.</title>
        <authorList>
            <person name="Tamas I."/>
            <person name="Klasson L."/>
            <person name="Canbaeck B."/>
            <person name="Naeslund A.K."/>
            <person name="Eriksson A.-S."/>
            <person name="Wernegreen J.J."/>
            <person name="Sandstroem J.P."/>
            <person name="Moran N.A."/>
            <person name="Andersson S.G.E."/>
        </authorList>
    </citation>
    <scope>NUCLEOTIDE SEQUENCE [LARGE SCALE GENOMIC DNA]</scope>
    <source>
        <strain>Sg</strain>
    </source>
</reference>
<name>TLDD_BUCAP</name>
<protein>
    <recommendedName>
        <fullName>Metalloprotease TldD homolog</fullName>
        <ecNumber>3.4.-.-</ecNumber>
    </recommendedName>
</protein>
<keyword id="KW-0378">Hydrolase</keyword>
<keyword id="KW-0482">Metalloprotease</keyword>
<keyword id="KW-0645">Protease</keyword>
<accession>Q8K9F2</accession>
<gene>
    <name type="primary">tldD</name>
    <name type="ordered locus">BUsg_385</name>
</gene>
<sequence length="483" mass="53564">MTLELVTESLLTKNQINHQDVFSCLEDFCTHNIDYGDFYFQSRICESWSLENGIIKEGDYHLDQGVGVRAVSGETTGFSYADQISIDAVRKSAHMAKSIFDKKEKIKIKPLLNQEKKFFYDPINPLKTFTSSEKTNLLYKVDHIARKTDNRVVQVNANLSGSYEEILVVSTEGNLATDIRPLVEFSVSVLVEERGRREKGRSGGGSRTNYSFFITQDDCFGENRIDYWTKEAVRIALLNLSSHEAPSGTFPVVLGSGWPGVLLHEAVGHGLEGDFNRRGTSIFTNMIEKKVASELCTIIDDGTMKNQRGSLNIDDEGVPGQCNVLIENGILKKYMQDKLNARLMNTKSTGNGRRESYSHLPMPRMTNTYMIPGKSKLEDIINSVDYGIYAINFSGGQVDITSGQFVFSTSEAYLVKKGKIFSPIRNTTLIGSGLEVMQQISMVGNDLKMDQGMGMCGKDGQNIPVGIGQPSIKLEKLTVGGTV</sequence>
<comment type="function">
    <text evidence="1">Probable metalloprotease.</text>
</comment>
<comment type="similarity">
    <text evidence="2">Belongs to the peptidase U62 family.</text>
</comment>
<organism>
    <name type="scientific">Buchnera aphidicola subsp. Schizaphis graminum (strain Sg)</name>
    <dbReference type="NCBI Taxonomy" id="198804"/>
    <lineage>
        <taxon>Bacteria</taxon>
        <taxon>Pseudomonadati</taxon>
        <taxon>Pseudomonadota</taxon>
        <taxon>Gammaproteobacteria</taxon>
        <taxon>Enterobacterales</taxon>
        <taxon>Erwiniaceae</taxon>
        <taxon>Buchnera</taxon>
    </lineage>
</organism>
<proteinExistence type="inferred from homology"/>
<evidence type="ECO:0000250" key="1"/>
<evidence type="ECO:0000305" key="2"/>